<accession>P41235</accession>
<accession>A5JW41</accession>
<accession>B2RPP8</accession>
<accession>O00659</accession>
<accession>O00723</accession>
<accession>Q14540</accession>
<accession>Q5QPB8</accession>
<accession>Q6B4V5</accession>
<accession>Q6B4V6</accession>
<accession>Q6B4V7</accession>
<accession>Q92653</accession>
<accession>Q92654</accession>
<accession>Q92655</accession>
<accession>Q99864</accession>
<accession>Q9NQH0</accession>
<organism>
    <name type="scientific">Homo sapiens</name>
    <name type="common">Human</name>
    <dbReference type="NCBI Taxonomy" id="9606"/>
    <lineage>
        <taxon>Eukaryota</taxon>
        <taxon>Metazoa</taxon>
        <taxon>Chordata</taxon>
        <taxon>Craniata</taxon>
        <taxon>Vertebrata</taxon>
        <taxon>Euteleostomi</taxon>
        <taxon>Mammalia</taxon>
        <taxon>Eutheria</taxon>
        <taxon>Euarchontoglires</taxon>
        <taxon>Primates</taxon>
        <taxon>Haplorrhini</taxon>
        <taxon>Catarrhini</taxon>
        <taxon>Hominidae</taxon>
        <taxon>Homo</taxon>
    </lineage>
</organism>
<proteinExistence type="evidence at protein level"/>
<gene>
    <name type="primary">HNF4A</name>
    <name type="synonym">HNF4</name>
    <name type="synonym">NR2A1</name>
    <name type="synonym">TCF14</name>
</gene>
<sequence>MRLSKTLVDMDMADYSAALDPAYTTLEFENVQVLTMGNDTSPSEGTNLNAPNSLGVSALCAICGDRATGKHYGASSCDGCKGFFRRSVRKNHMYSCRFSRQCVVDKDKRNQCRYCRLKKCFRAGMKKEAVQNERDRISTRRSSYEDSSLPSINALLQAEVLSRQITSPVSGINGDIRAKKIASIADVCESMKEQLLVLVEWAKYIPAFCELPLDDQVALLRAHAGEHLLLGATKRSMVFKDVLLLGNDYIVPRHCPELAEMSRVSIRILDELVLPFQELQIDDNEYAYLKAIIFFDPDAKGLSDPGKIKRLRSQVQVSLEDYINDRQYDSRGRFGELLLLLPTLQSITWQMIEQIQFIKLFGMAKIDNLLQEMLLGGSPSDAPHAHHPLHPHLMQEHMGTNVIVANTMPTHLSNGQMCEWPRPRGQAATPETPQPSPPGGSGSEPYKLLPGAVATIVKPLSAIPQPTITKQEVI</sequence>
<name>HNF4A_HUMAN</name>
<evidence type="ECO:0000250" key="1">
    <source>
        <dbReference type="UniProtKB" id="P22449"/>
    </source>
</evidence>
<evidence type="ECO:0000250" key="2">
    <source>
        <dbReference type="UniProtKB" id="P49698"/>
    </source>
</evidence>
<evidence type="ECO:0000255" key="3">
    <source>
        <dbReference type="PROSITE-ProRule" id="PRU00407"/>
    </source>
</evidence>
<evidence type="ECO:0000255" key="4">
    <source>
        <dbReference type="PROSITE-ProRule" id="PRU01189"/>
    </source>
</evidence>
<evidence type="ECO:0000256" key="5">
    <source>
        <dbReference type="SAM" id="MobiDB-lite"/>
    </source>
</evidence>
<evidence type="ECO:0000269" key="6">
    <source>
    </source>
</evidence>
<evidence type="ECO:0000269" key="7">
    <source>
    </source>
</evidence>
<evidence type="ECO:0000269" key="8">
    <source>
    </source>
</evidence>
<evidence type="ECO:0000269" key="9">
    <source>
    </source>
</evidence>
<evidence type="ECO:0000269" key="10">
    <source>
    </source>
</evidence>
<evidence type="ECO:0000269" key="11">
    <source>
    </source>
</evidence>
<evidence type="ECO:0000269" key="12">
    <source>
    </source>
</evidence>
<evidence type="ECO:0000269" key="13">
    <source>
    </source>
</evidence>
<evidence type="ECO:0000269" key="14">
    <source>
    </source>
</evidence>
<evidence type="ECO:0000269" key="15">
    <source>
    </source>
</evidence>
<evidence type="ECO:0000269" key="16">
    <source>
    </source>
</evidence>
<evidence type="ECO:0000269" key="17">
    <source>
    </source>
</evidence>
<evidence type="ECO:0000269" key="18">
    <source>
    </source>
</evidence>
<evidence type="ECO:0000269" key="19">
    <source>
    </source>
</evidence>
<evidence type="ECO:0000269" key="20">
    <source>
    </source>
</evidence>
<evidence type="ECO:0000269" key="21">
    <source>
    </source>
</evidence>
<evidence type="ECO:0000269" key="22">
    <source>
    </source>
</evidence>
<evidence type="ECO:0000269" key="23">
    <source ref="5"/>
</evidence>
<evidence type="ECO:0000303" key="24">
    <source>
    </source>
</evidence>
<evidence type="ECO:0000303" key="25">
    <source>
    </source>
</evidence>
<evidence type="ECO:0000305" key="26"/>
<evidence type="ECO:0000305" key="27">
    <source>
    </source>
</evidence>
<evidence type="ECO:0007744" key="28">
    <source>
    </source>
</evidence>
<evidence type="ECO:0007829" key="29">
    <source>
        <dbReference type="PDB" id="1PZL"/>
    </source>
</evidence>
<evidence type="ECO:0007829" key="30">
    <source>
        <dbReference type="PDB" id="3CBB"/>
    </source>
</evidence>
<evidence type="ECO:0007829" key="31">
    <source>
        <dbReference type="PDB" id="4IQR"/>
    </source>
</evidence>
<reference key="1">
    <citation type="journal article" date="1996" name="Gene">
        <title>Isolation and characterization of a third isoform of human hepatocyte nuclear factor 4.</title>
        <authorList>
            <person name="Kritis A.A."/>
            <person name="Argyrokastritis A."/>
            <person name="Moschonas N.K."/>
            <person name="Power S."/>
            <person name="Katrakili N."/>
            <person name="Zannis V.I."/>
            <person name="Cereghini S."/>
            <person name="Talianidis I."/>
        </authorList>
    </citation>
    <scope>NUCLEOTIDE SEQUENCE [MRNA] (ISOFORMS HNF4-ALPHA-1; HNF4-ALPHA-2 AND HNF4-ALPHA-3)</scope>
    <scope>VARIANT SER-445</scope>
    <source>
        <tissue>Liver</tissue>
    </source>
</reference>
<reference key="2">
    <citation type="journal article" date="1996" name="Mol. Cell. Biol.">
        <title>Human hepatocyte nuclear factor 4 isoforms are encoded by distinct and differentially expressed genes.</title>
        <authorList>
            <person name="Drewes T."/>
            <person name="Senkel S."/>
            <person name="Holewa B."/>
            <person name="Ryffel G.U."/>
        </authorList>
    </citation>
    <scope>NUCLEOTIDE SEQUENCE [MRNA]</scope>
    <scope>ALTERNATIVE SPLICING</scope>
    <source>
        <tissue>Kidney</tissue>
    </source>
</reference>
<reference key="3">
    <citation type="journal article" date="1996" name="Nature">
        <title>Mutations in the hepatocyte nuclear factor-4alpha gene in maturity-onset diabetes of the young (MODY1).</title>
        <authorList>
            <person name="Yamagata K."/>
            <person name="Furuta H."/>
            <person name="Oda N."/>
            <person name="Kaisaki P.J."/>
            <person name="Menzel S."/>
            <person name="Cox N.J."/>
            <person name="Fajans S.S."/>
            <person name="Signorini S."/>
            <person name="Stoffel M."/>
            <person name="Bell G.I."/>
        </authorList>
    </citation>
    <scope>NUCLEOTIDE SEQUENCE [GENOMIC DNA]</scope>
</reference>
<reference key="4">
    <citation type="submission" date="2004-07" db="EMBL/GenBank/DDBJ databases">
        <title>Variation in P1 and P2 promoter-driven hepatocyte nuclear factor-4a (HNF4a) expression in human tissues: implications for carcinogenesis.</title>
        <authorList>
            <person name="Tanaka T."/>
            <person name="Jiang S."/>
            <person name="Hotta H."/>
            <person name="Takano K."/>
            <person name="Iwanari H."/>
            <person name="Hirayama Y."/>
            <person name="Midorikawa Y."/>
            <person name="Hippo Y."/>
            <person name="Watanabe A."/>
            <person name="Yamashita H."/>
            <person name="Kumakura J."/>
            <person name="Uchiyama Y."/>
            <person name="Hasegawa G."/>
            <person name="Aburatani H."/>
            <person name="Hamakubo T."/>
            <person name="Naito M."/>
            <person name="Sakai J."/>
            <person name="Kodama T."/>
        </authorList>
    </citation>
    <scope>NUCLEOTIDE SEQUENCE [MRNA]</scope>
    <scope>ALTERNATIVE PROMOTER USAGE (ISOFORMS HNF4-ALPHA-7; HNF4-ALPHA-8 AND HNF4-ALPHA-9)</scope>
</reference>
<reference key="5">
    <citation type="submission" date="2007-05" db="EMBL/GenBank/DDBJ databases">
        <authorList>
            <consortium name="SeattleSNPs variation discovery resource"/>
        </authorList>
    </citation>
    <scope>NUCLEOTIDE SEQUENCE [GENOMIC DNA]</scope>
    <scope>VARIANTS ILE-139 AND ILE-453</scope>
</reference>
<reference key="6">
    <citation type="journal article" date="2001" name="Nature">
        <title>The DNA sequence and comparative analysis of human chromosome 20.</title>
        <authorList>
            <person name="Deloukas P."/>
            <person name="Matthews L.H."/>
            <person name="Ashurst J.L."/>
            <person name="Burton J."/>
            <person name="Gilbert J.G.R."/>
            <person name="Jones M."/>
            <person name="Stavrides G."/>
            <person name="Almeida J.P."/>
            <person name="Babbage A.K."/>
            <person name="Bagguley C.L."/>
            <person name="Bailey J."/>
            <person name="Barlow K.F."/>
            <person name="Bates K.N."/>
            <person name="Beard L.M."/>
            <person name="Beare D.M."/>
            <person name="Beasley O.P."/>
            <person name="Bird C.P."/>
            <person name="Blakey S.E."/>
            <person name="Bridgeman A.M."/>
            <person name="Brown A.J."/>
            <person name="Buck D."/>
            <person name="Burrill W.D."/>
            <person name="Butler A.P."/>
            <person name="Carder C."/>
            <person name="Carter N.P."/>
            <person name="Chapman J.C."/>
            <person name="Clamp M."/>
            <person name="Clark G."/>
            <person name="Clark L.N."/>
            <person name="Clark S.Y."/>
            <person name="Clee C.M."/>
            <person name="Clegg S."/>
            <person name="Cobley V.E."/>
            <person name="Collier R.E."/>
            <person name="Connor R.E."/>
            <person name="Corby N.R."/>
            <person name="Coulson A."/>
            <person name="Coville G.J."/>
            <person name="Deadman R."/>
            <person name="Dhami P.D."/>
            <person name="Dunn M."/>
            <person name="Ellington A.G."/>
            <person name="Frankland J.A."/>
            <person name="Fraser A."/>
            <person name="French L."/>
            <person name="Garner P."/>
            <person name="Grafham D.V."/>
            <person name="Griffiths C."/>
            <person name="Griffiths M.N.D."/>
            <person name="Gwilliam R."/>
            <person name="Hall R.E."/>
            <person name="Hammond S."/>
            <person name="Harley J.L."/>
            <person name="Heath P.D."/>
            <person name="Ho S."/>
            <person name="Holden J.L."/>
            <person name="Howden P.J."/>
            <person name="Huckle E."/>
            <person name="Hunt A.R."/>
            <person name="Hunt S.E."/>
            <person name="Jekosch K."/>
            <person name="Johnson C.M."/>
            <person name="Johnson D."/>
            <person name="Kay M.P."/>
            <person name="Kimberley A.M."/>
            <person name="King A."/>
            <person name="Knights A."/>
            <person name="Laird G.K."/>
            <person name="Lawlor S."/>
            <person name="Lehvaeslaiho M.H."/>
            <person name="Leversha M.A."/>
            <person name="Lloyd C."/>
            <person name="Lloyd D.M."/>
            <person name="Lovell J.D."/>
            <person name="Marsh V.L."/>
            <person name="Martin S.L."/>
            <person name="McConnachie L.J."/>
            <person name="McLay K."/>
            <person name="McMurray A.A."/>
            <person name="Milne S.A."/>
            <person name="Mistry D."/>
            <person name="Moore M.J.F."/>
            <person name="Mullikin J.C."/>
            <person name="Nickerson T."/>
            <person name="Oliver K."/>
            <person name="Parker A."/>
            <person name="Patel R."/>
            <person name="Pearce T.A.V."/>
            <person name="Peck A.I."/>
            <person name="Phillimore B.J.C.T."/>
            <person name="Prathalingam S.R."/>
            <person name="Plumb R.W."/>
            <person name="Ramsay H."/>
            <person name="Rice C.M."/>
            <person name="Ross M.T."/>
            <person name="Scott C.E."/>
            <person name="Sehra H.K."/>
            <person name="Shownkeen R."/>
            <person name="Sims S."/>
            <person name="Skuce C.D."/>
            <person name="Smith M.L."/>
            <person name="Soderlund C."/>
            <person name="Steward C.A."/>
            <person name="Sulston J.E."/>
            <person name="Swann R.M."/>
            <person name="Sycamore N."/>
            <person name="Taylor R."/>
            <person name="Tee L."/>
            <person name="Thomas D.W."/>
            <person name="Thorpe A."/>
            <person name="Tracey A."/>
            <person name="Tromans A.C."/>
            <person name="Vaudin M."/>
            <person name="Wall M."/>
            <person name="Wallis J.M."/>
            <person name="Whitehead S.L."/>
            <person name="Whittaker P."/>
            <person name="Willey D.L."/>
            <person name="Williams L."/>
            <person name="Williams S.A."/>
            <person name="Wilming L."/>
            <person name="Wray P.W."/>
            <person name="Hubbard T."/>
            <person name="Durbin R.M."/>
            <person name="Bentley D.R."/>
            <person name="Beck S."/>
            <person name="Rogers J."/>
        </authorList>
    </citation>
    <scope>NUCLEOTIDE SEQUENCE [LARGE SCALE GENOMIC DNA]</scope>
</reference>
<reference key="7">
    <citation type="submission" date="2005-09" db="EMBL/GenBank/DDBJ databases">
        <authorList>
            <person name="Mural R.J."/>
            <person name="Istrail S."/>
            <person name="Sutton G.G."/>
            <person name="Florea L."/>
            <person name="Halpern A.L."/>
            <person name="Mobarry C.M."/>
            <person name="Lippert R."/>
            <person name="Walenz B."/>
            <person name="Shatkay H."/>
            <person name="Dew I."/>
            <person name="Miller J.R."/>
            <person name="Flanigan M.J."/>
            <person name="Edwards N.J."/>
            <person name="Bolanos R."/>
            <person name="Fasulo D."/>
            <person name="Halldorsson B.V."/>
            <person name="Hannenhalli S."/>
            <person name="Turner R."/>
            <person name="Yooseph S."/>
            <person name="Lu F."/>
            <person name="Nusskern D.R."/>
            <person name="Shue B.C."/>
            <person name="Zheng X.H."/>
            <person name="Zhong F."/>
            <person name="Delcher A.L."/>
            <person name="Huson D.H."/>
            <person name="Kravitz S.A."/>
            <person name="Mouchard L."/>
            <person name="Reinert K."/>
            <person name="Remington K.A."/>
            <person name="Clark A.G."/>
            <person name="Waterman M.S."/>
            <person name="Eichler E.E."/>
            <person name="Adams M.D."/>
            <person name="Hunkapiller M.W."/>
            <person name="Myers E.W."/>
            <person name="Venter J.C."/>
        </authorList>
    </citation>
    <scope>NUCLEOTIDE SEQUENCE [LARGE SCALE GENOMIC DNA]</scope>
</reference>
<reference key="8">
    <citation type="journal article" date="2004" name="Genome Res.">
        <title>The status, quality, and expansion of the NIH full-length cDNA project: the Mammalian Gene Collection (MGC).</title>
        <authorList>
            <consortium name="The MGC Project Team"/>
        </authorList>
    </citation>
    <scope>NUCLEOTIDE SEQUENCE [LARGE SCALE MRNA] (ISOFORM HNF4-ALPHA-3)</scope>
</reference>
<reference key="9">
    <citation type="journal article" date="1994" name="Gene">
        <title>Cloning and sequencing of cDNAs encoding the human hepatocyte nuclear factor 4 indicate the presence of two isoforms in human liver.</title>
        <authorList>
            <person name="Chartier F.L."/>
            <person name="Bossu J.-P."/>
            <person name="Laudet V."/>
            <person name="Fruchart J.-C."/>
            <person name="Laine B."/>
        </authorList>
    </citation>
    <scope>NUCLEOTIDE SEQUENCE [MRNA] OF 4-474</scope>
    <scope>ALTERNATIVE SPLICING</scope>
    <source>
        <tissue>Liver</tissue>
    </source>
</reference>
<reference key="10">
    <citation type="journal article" date="1995" name="Proc. Natl. Acad. Sci. U.S.A.">
        <title>Recruitment of hepatocyte nuclear factor 4 into specific intranuclear compartments depends on tyrosine phosphorylation that affects its DNA-binding and transactivation potential.</title>
        <authorList>
            <person name="Ktistaki E."/>
            <person name="Ktistakis N.T."/>
            <person name="Papadogeorgaki E."/>
            <person name="Talianidis I."/>
        </authorList>
    </citation>
    <scope>PHOSPHORYLATION</scope>
</reference>
<reference key="11">
    <citation type="journal article" date="2003" name="J. Biol. Chem.">
        <title>AMP-activated protein kinase regulates HNF4alpha transcriptional activity by inhibiting dimer formation and decreasing protein stability.</title>
        <authorList>
            <person name="Hong Y.H."/>
            <person name="Varanasi U.S."/>
            <person name="Yang W."/>
            <person name="Leff T."/>
        </authorList>
    </citation>
    <scope>PHOSPHORYLATION AT SER-313</scope>
    <scope>MUTAGENESIS OF SER-313</scope>
</reference>
<reference key="12">
    <citation type="journal article" date="2011" name="Biochem. Biophys. Res. Commun.">
        <title>Multiple post-translational modifications in hepatocyte nuclear factor 4alpha.</title>
        <authorList>
            <person name="Yokoyama A."/>
            <person name="Katsura S."/>
            <person name="Ito R."/>
            <person name="Hashiba W."/>
            <person name="Sekine H."/>
            <person name="Fujiki R."/>
            <person name="Kato S."/>
        </authorList>
    </citation>
    <scope>PHOSPHORYLATION AT SER-142; THR-166; SER-167; THR-432 AND SER-436</scope>
    <scope>UBIQUITINATION AT LYS-234 AND LYS-307</scope>
    <scope>ACETYLATION AT LYS-458</scope>
</reference>
<reference key="13">
    <citation type="journal article" date="2014" name="J. Proteomics">
        <title>An enzyme assisted RP-RPLC approach for in-depth analysis of human liver phosphoproteome.</title>
        <authorList>
            <person name="Bian Y."/>
            <person name="Song C."/>
            <person name="Cheng K."/>
            <person name="Dong M."/>
            <person name="Wang F."/>
            <person name="Huang J."/>
            <person name="Sun D."/>
            <person name="Wang L."/>
            <person name="Ye M."/>
            <person name="Zou H."/>
        </authorList>
    </citation>
    <scope>PHOSPHORYLATION [LARGE SCALE ANALYSIS] AT TYR-144; THR-429; THR-432 AND SER-436</scope>
    <scope>IDENTIFICATION BY MASS SPECTROMETRY [LARGE SCALE ANALYSIS]</scope>
    <source>
        <tissue>Liver</tissue>
    </source>
</reference>
<reference key="14">
    <citation type="journal article" date="2017" name="Sci. Rep.">
        <title>RNA helicase DDX3 maintains lipid homeostasis through upregulation of the microsomal triglyceride transfer protein by interacting with HNF4 and SHP.</title>
        <authorList>
            <person name="Tsai T.Y."/>
            <person name="Wang W.T."/>
            <person name="Li H.K."/>
            <person name="Chen W.J."/>
            <person name="Tsai Y.H."/>
            <person name="Chao C.H."/>
            <person name="Wu Lee Y.H."/>
        </authorList>
    </citation>
    <scope>INTERACTION WITH DDX3X AND NR0B2</scope>
</reference>
<reference key="15">
    <citation type="journal article" date="2019" name="J. Steroid Biochem. Mol. Biol.">
        <title>Nuclear hormone receptors: Ancient 9aaTAD and evolutionally gained NCoA activation pathways.</title>
        <authorList>
            <person name="Piskacek M."/>
            <person name="Havelka M."/>
            <person name="Jendruchova K."/>
            <person name="Knight A."/>
        </authorList>
    </citation>
    <scope>9AATAD MOTIF</scope>
</reference>
<reference key="16">
    <citation type="journal article" date="2018" name="Genes (Basel)">
        <title>HNF4A regulates the formation of hepatic progenitor cells from human iPSC-Derived endoderm by facilitating efficient recruitment of RNA Pol II.</title>
        <authorList>
            <person name="DeLaForest A."/>
            <person name="Di Furio F."/>
            <person name="Jing R."/>
            <person name="Ludwig-Kubinski A."/>
            <person name="Twaroski K."/>
            <person name="Urick A."/>
            <person name="Pulakanti K."/>
            <person name="Rao S."/>
            <person name="Duncan S.A."/>
        </authorList>
    </citation>
    <scope>FUNCTION</scope>
</reference>
<reference key="17">
    <citation type="journal article" date="2018" name="Proc. Natl. Acad. Sci. U.S.A.">
        <title>Nuclear receptor HNF4A transrepresses CLOCK:BMAL1 and modulates tissue-specific circadian networks.</title>
        <authorList>
            <person name="Qu M."/>
            <person name="Duffy T."/>
            <person name="Hirota T."/>
            <person name="Kay S.A."/>
        </authorList>
    </citation>
    <scope>FUNCTION</scope>
    <scope>INTERACTION WITH CLOCK; BMAL1; CRY1; CRY2; PER1 AND PER2</scope>
</reference>
<reference key="18">
    <citation type="journal article" date="2004" name="J. Biol. Chem.">
        <title>Structural basis for HNF-4alpha activation by ligand and coactivator binding.</title>
        <authorList>
            <person name="Duda K."/>
            <person name="Chi Y.-I."/>
            <person name="Shoelson S.E."/>
        </authorList>
    </citation>
    <scope>X-RAY CRYSTALLOGRAPHY (2.1 ANGSTROMS) OF 142-378</scope>
    <scope>FATTY ACID BINDING</scope>
    <scope>SUBUNIT</scope>
</reference>
<reference key="19">
    <citation type="journal article" date="1997" name="Diabetes">
        <title>Organization and partial sequence of the hepatocyte nuclear factor-4-alpha/MODY1 gene and identification of a missense mutation, R127W, in a Japanese family with MODY.</title>
        <authorList>
            <person name="Furuta H."/>
            <person name="Iwasaki N."/>
            <person name="Oda N."/>
            <person name="Hinokio Y."/>
            <person name="Horikawa Y."/>
            <person name="Yamagata K."/>
            <person name="Yano N."/>
            <person name="Sugahiro J."/>
            <person name="Ogata M."/>
            <person name="Ohgawara H."/>
            <person name="Omori Y."/>
            <person name="Iwamoto Y."/>
            <person name="Bell G.I."/>
        </authorList>
    </citation>
    <scope>VARIANT MODY1 TRP-136</scope>
</reference>
<reference key="20">
    <citation type="journal article" date="1997" name="Diabetologia">
        <title>A missense mutation in the hepatocyte nuclear factor 4 alpha gene in a UK pedigree with maturity-onset diabetes of the young.</title>
        <authorList>
            <person name="Bulman M.P."/>
            <person name="Dronsfield M.J."/>
            <person name="Frayling T.M."/>
            <person name="Appleton M."/>
            <person name="Bain S.C."/>
            <person name="Ellard S."/>
            <person name="Hattersley A.T."/>
        </authorList>
    </citation>
    <scope>VARIANT MODY1 GLN-285</scope>
</reference>
<reference key="21">
    <citation type="journal article" date="1997" name="Diabetologia">
        <title>Studies of the genetic variability of the coding region of the hepatocyte nuclear factor-4alpha in Caucasians with maturity onset NIDDM.</title>
        <authorList>
            <person name="Moeller A.M."/>
            <person name="Urhammer S.A."/>
            <person name="Dalgaard L.T."/>
            <person name="Reneland R."/>
            <person name="Berglund L."/>
            <person name="Hansen T."/>
            <person name="Clausen J.O."/>
            <person name="Lithell H."/>
            <person name="Pedersen O."/>
        </authorList>
    </citation>
    <scope>VARIANTS ILE-139 AND MET-264</scope>
</reference>
<reference key="22">
    <citation type="journal article" date="1998" name="J. Clin. Invest.">
        <title>A missense mutation in hepatocyte nuclear factor-4-alpha, resulting in a reduced transactivation activity, in human late-onset non-insulin-dependent diabetes mellitus.</title>
        <authorList>
            <person name="Hani E.H."/>
            <person name="Suaud L."/>
            <person name="Boutin P."/>
            <person name="Chevre J.-C."/>
            <person name="Durand E."/>
            <person name="Philippi A."/>
            <person name="Demenais F."/>
            <person name="Vionnet N."/>
            <person name="Furuta H."/>
            <person name="Velho G."/>
            <person name="Bell G.I."/>
            <person name="Laine B."/>
            <person name="Froguel P."/>
        </authorList>
    </citation>
    <scope>VARIANT T2D ILE-402</scope>
</reference>
<reference key="23">
    <citation type="journal article" date="1999" name="Diabetes">
        <title>Functional characterization of the MODY1 gene mutations HNF4(R127W), HNF4(V255M), and HNF4(E276Q).</title>
        <authorList>
            <person name="Navas M.A."/>
            <person name="Munoz-Elias E.J."/>
            <person name="Kim J."/>
            <person name="Shih D."/>
            <person name="Stoffel M."/>
        </authorList>
    </citation>
    <scope>CHARACTERIZATION OF VARIANT MET-264</scope>
    <scope>CHARACTERIZATION OF VARIANT MODY1 GLN-285</scope>
</reference>
<reference key="24">
    <citation type="journal article" date="2007" name="PLoS Med.">
        <title>Macrosomia and hyperinsulinaemic hypoglycaemia in patients with heterozygous mutations in the HNF4A gene.</title>
        <authorList>
            <person name="Pearson E.R."/>
            <person name="Boj S.F."/>
            <person name="Steele A.M."/>
            <person name="Barrett T."/>
            <person name="Stals K."/>
            <person name="Shield J.P."/>
            <person name="Ellard S."/>
            <person name="Ferrer J."/>
            <person name="Hattersley A.T."/>
        </authorList>
    </citation>
    <scope>VARIANT MODY1 ARG-373</scope>
</reference>
<reference key="25">
    <citation type="journal article" date="2012" name="J. Clin. Endocrinol. Metab.">
        <title>Novel presentations of congenital hyperinsulinism due to mutations in the MODY genes: HNF1A and HNF4A.</title>
        <authorList>
            <person name="Stanescu D.E."/>
            <person name="Hughes N."/>
            <person name="Kaplan B."/>
            <person name="Stanley C.A."/>
            <person name="De Leon D.D."/>
        </authorList>
    </citation>
    <scope>INVOLVEMENT IN FRTS4</scope>
    <scope>VARIANT FRTS4 TRP-85</scope>
</reference>
<reference key="26">
    <citation type="journal article" date="2014" name="J. Med. Genet.">
        <title>The HNF4A R76W mutation causes atypical dominant Fanconi syndrome in addition to a beta cell phenotype.</title>
        <authorList>
            <person name="Hamilton A.J."/>
            <person name="Bingham C."/>
            <person name="McDonald T.J."/>
            <person name="Cook P.R."/>
            <person name="Caswell R.C."/>
            <person name="Weedon M.N."/>
            <person name="Oram R.A."/>
            <person name="Shields B.M."/>
            <person name="Shepherd M."/>
            <person name="Inward C.D."/>
            <person name="Hamilton-Shield J.P."/>
            <person name="Kohlhase J."/>
            <person name="Ellard S."/>
            <person name="Hattersley A.T."/>
        </authorList>
    </citation>
    <scope>VARIANT FRTS4 TRP-85</scope>
</reference>
<protein>
    <recommendedName>
        <fullName>Hepatocyte nuclear factor 4-alpha</fullName>
        <shortName>HNF-4-alpha</shortName>
    </recommendedName>
    <alternativeName>
        <fullName>Nuclear receptor subfamily 2 group A member 1</fullName>
    </alternativeName>
    <alternativeName>
        <fullName>Transcription factor 14</fullName>
        <shortName>TCF-14</shortName>
    </alternativeName>
    <alternativeName>
        <fullName>Transcription factor HNF-4</fullName>
    </alternativeName>
</protein>
<keyword id="KW-0002">3D-structure</keyword>
<keyword id="KW-0007">Acetylation</keyword>
<keyword id="KW-0010">Activator</keyword>
<keyword id="KW-0877">Alternative promoter usage</keyword>
<keyword id="KW-0025">Alternative splicing</keyword>
<keyword id="KW-0090">Biological rhythms</keyword>
<keyword id="KW-0219">Diabetes mellitus</keyword>
<keyword id="KW-0225">Disease variant</keyword>
<keyword id="KW-0238">DNA-binding</keyword>
<keyword id="KW-1017">Isopeptide bond</keyword>
<keyword id="KW-0479">Metal-binding</keyword>
<keyword id="KW-0539">Nucleus</keyword>
<keyword id="KW-0597">Phosphoprotein</keyword>
<keyword id="KW-1267">Proteomics identification</keyword>
<keyword id="KW-0675">Receptor</keyword>
<keyword id="KW-1185">Reference proteome</keyword>
<keyword id="KW-0678">Repressor</keyword>
<keyword id="KW-0804">Transcription</keyword>
<keyword id="KW-0805">Transcription regulation</keyword>
<keyword id="KW-0832">Ubl conjugation</keyword>
<keyword id="KW-0862">Zinc</keyword>
<keyword id="KW-0863">Zinc-finger</keyword>
<dbReference type="EMBL" id="X87870">
    <property type="protein sequence ID" value="CAA61133.1"/>
    <property type="status" value="ALT_FRAME"/>
    <property type="molecule type" value="mRNA"/>
</dbReference>
<dbReference type="EMBL" id="X87871">
    <property type="protein sequence ID" value="CAA61134.1"/>
    <property type="status" value="ALT_FRAME"/>
    <property type="molecule type" value="mRNA"/>
</dbReference>
<dbReference type="EMBL" id="X87872">
    <property type="protein sequence ID" value="CAA61135.1"/>
    <property type="status" value="ALT_FRAME"/>
    <property type="molecule type" value="mRNA"/>
</dbReference>
<dbReference type="EMBL" id="Z49825">
    <property type="protein sequence ID" value="CAA89989.1"/>
    <property type="molecule type" value="mRNA"/>
</dbReference>
<dbReference type="EMBL" id="AY680696">
    <property type="protein sequence ID" value="AAT91237.1"/>
    <property type="molecule type" value="mRNA"/>
</dbReference>
<dbReference type="EMBL" id="AY680697">
    <property type="protein sequence ID" value="AAT91238.1"/>
    <property type="molecule type" value="mRNA"/>
</dbReference>
<dbReference type="EMBL" id="AY680698">
    <property type="protein sequence ID" value="AAT91239.1"/>
    <property type="molecule type" value="mRNA"/>
</dbReference>
<dbReference type="EMBL" id="U72969">
    <property type="protein sequence ID" value="AAB48082.1"/>
    <property type="status" value="ALT_SEQ"/>
    <property type="molecule type" value="Genomic_DNA"/>
</dbReference>
<dbReference type="EMBL" id="U72959">
    <property type="protein sequence ID" value="AAB48082.1"/>
    <property type="status" value="JOINED"/>
    <property type="molecule type" value="Genomic_DNA"/>
</dbReference>
<dbReference type="EMBL" id="U72961">
    <property type="protein sequence ID" value="AAB48082.1"/>
    <property type="status" value="JOINED"/>
    <property type="molecule type" value="Genomic_DNA"/>
</dbReference>
<dbReference type="EMBL" id="U72962">
    <property type="protein sequence ID" value="AAB48082.1"/>
    <property type="status" value="JOINED"/>
    <property type="molecule type" value="Genomic_DNA"/>
</dbReference>
<dbReference type="EMBL" id="U72963">
    <property type="protein sequence ID" value="AAB48082.1"/>
    <property type="status" value="JOINED"/>
    <property type="molecule type" value="Genomic_DNA"/>
</dbReference>
<dbReference type="EMBL" id="U72964">
    <property type="protein sequence ID" value="AAB48082.1"/>
    <property type="status" value="JOINED"/>
    <property type="molecule type" value="Genomic_DNA"/>
</dbReference>
<dbReference type="EMBL" id="U72965">
    <property type="protein sequence ID" value="AAB48082.1"/>
    <property type="status" value="JOINED"/>
    <property type="molecule type" value="Genomic_DNA"/>
</dbReference>
<dbReference type="EMBL" id="U72966">
    <property type="protein sequence ID" value="AAB48082.1"/>
    <property type="status" value="JOINED"/>
    <property type="molecule type" value="Genomic_DNA"/>
</dbReference>
<dbReference type="EMBL" id="U72967">
    <property type="protein sequence ID" value="AAB48082.1"/>
    <property type="status" value="JOINED"/>
    <property type="molecule type" value="Genomic_DNA"/>
</dbReference>
<dbReference type="EMBL" id="U72968">
    <property type="protein sequence ID" value="AAB48082.1"/>
    <property type="status" value="JOINED"/>
    <property type="molecule type" value="Genomic_DNA"/>
</dbReference>
<dbReference type="EMBL" id="U72967">
    <property type="protein sequence ID" value="AAB48083.1"/>
    <property type="molecule type" value="Genomic_DNA"/>
</dbReference>
<dbReference type="EMBL" id="U72959">
    <property type="protein sequence ID" value="AAB48083.1"/>
    <property type="status" value="JOINED"/>
    <property type="molecule type" value="Genomic_DNA"/>
</dbReference>
<dbReference type="EMBL" id="U72961">
    <property type="protein sequence ID" value="AAB48083.1"/>
    <property type="status" value="JOINED"/>
    <property type="molecule type" value="Genomic_DNA"/>
</dbReference>
<dbReference type="EMBL" id="U72962">
    <property type="protein sequence ID" value="AAB48083.1"/>
    <property type="status" value="JOINED"/>
    <property type="molecule type" value="Genomic_DNA"/>
</dbReference>
<dbReference type="EMBL" id="U72963">
    <property type="protein sequence ID" value="AAB48083.1"/>
    <property type="status" value="JOINED"/>
    <property type="molecule type" value="Genomic_DNA"/>
</dbReference>
<dbReference type="EMBL" id="U72964">
    <property type="protein sequence ID" value="AAB48083.1"/>
    <property type="status" value="JOINED"/>
    <property type="molecule type" value="Genomic_DNA"/>
</dbReference>
<dbReference type="EMBL" id="U72965">
    <property type="protein sequence ID" value="AAB48083.1"/>
    <property type="status" value="JOINED"/>
    <property type="molecule type" value="Genomic_DNA"/>
</dbReference>
<dbReference type="EMBL" id="U72966">
    <property type="protein sequence ID" value="AAB48083.1"/>
    <property type="status" value="JOINED"/>
    <property type="molecule type" value="Genomic_DNA"/>
</dbReference>
<dbReference type="EMBL" id="EF591040">
    <property type="protein sequence ID" value="ABQ52204.1"/>
    <property type="molecule type" value="Genomic_DNA"/>
</dbReference>
<dbReference type="EMBL" id="AL132772">
    <property type="status" value="NOT_ANNOTATED_CDS"/>
    <property type="molecule type" value="Genomic_DNA"/>
</dbReference>
<dbReference type="EMBL" id="CH471077">
    <property type="protein sequence ID" value="EAW75924.1"/>
    <property type="molecule type" value="Genomic_DNA"/>
</dbReference>
<dbReference type="EMBL" id="CH471077">
    <property type="protein sequence ID" value="EAW75925.1"/>
    <property type="molecule type" value="Genomic_DNA"/>
</dbReference>
<dbReference type="EMBL" id="BC137539">
    <property type="protein sequence ID" value="AAI37540.1"/>
    <property type="molecule type" value="mRNA"/>
</dbReference>
<dbReference type="EMBL" id="BC137540">
    <property type="protein sequence ID" value="AAI37541.1"/>
    <property type="molecule type" value="mRNA"/>
</dbReference>
<dbReference type="EMBL" id="X76930">
    <property type="protein sequence ID" value="CAA54248.1"/>
    <property type="status" value="ALT_INIT"/>
    <property type="molecule type" value="mRNA"/>
</dbReference>
<dbReference type="CCDS" id="CCDS13330.1">
    <molecule id="P41235-1"/>
</dbReference>
<dbReference type="CCDS" id="CCDS13331.1">
    <molecule id="P41235-3"/>
</dbReference>
<dbReference type="CCDS" id="CCDS42876.1">
    <molecule id="P41235-5"/>
</dbReference>
<dbReference type="CCDS" id="CCDS46604.1">
    <molecule id="P41235-6"/>
</dbReference>
<dbReference type="CCDS" id="CCDS46605.1">
    <molecule id="P41235-2"/>
</dbReference>
<dbReference type="CCDS" id="CCDS68131.1">
    <molecule id="P41235-7"/>
</dbReference>
<dbReference type="PIR" id="JC4937">
    <property type="entry name" value="JC4937"/>
</dbReference>
<dbReference type="PIR" id="JC4938">
    <property type="entry name" value="JC4938"/>
</dbReference>
<dbReference type="PIR" id="JC6096">
    <property type="entry name" value="JC6096"/>
</dbReference>
<dbReference type="RefSeq" id="NP_000448.3">
    <molecule id="P41235-1"/>
    <property type="nucleotide sequence ID" value="NM_000457.4"/>
</dbReference>
<dbReference type="RefSeq" id="NP_001025174.1">
    <molecule id="P41235-6"/>
    <property type="nucleotide sequence ID" value="NM_001030003.3"/>
</dbReference>
<dbReference type="RefSeq" id="NP_001025175.1">
    <molecule id="P41235-7"/>
    <property type="nucleotide sequence ID" value="NM_001030004.3"/>
</dbReference>
<dbReference type="RefSeq" id="NP_001245284.1">
    <property type="nucleotide sequence ID" value="NM_001258355.1"/>
</dbReference>
<dbReference type="RefSeq" id="NP_001274111.1">
    <property type="nucleotide sequence ID" value="NM_001287182.1"/>
</dbReference>
<dbReference type="RefSeq" id="NP_001274112.1">
    <property type="nucleotide sequence ID" value="NM_001287183.1"/>
</dbReference>
<dbReference type="RefSeq" id="NP_001274113.1">
    <property type="nucleotide sequence ID" value="NM_001287184.1"/>
</dbReference>
<dbReference type="RefSeq" id="NP_787110.2">
    <molecule id="P41235-5"/>
    <property type="nucleotide sequence ID" value="NM_175914.4"/>
</dbReference>
<dbReference type="RefSeq" id="NP_849180.1">
    <molecule id="P41235-2"/>
    <property type="nucleotide sequence ID" value="NM_178849.3"/>
</dbReference>
<dbReference type="RefSeq" id="NP_849181.1">
    <molecule id="P41235-3"/>
    <property type="nucleotide sequence ID" value="NM_178850.3"/>
</dbReference>
<dbReference type="RefSeq" id="XP_047296091.1">
    <molecule id="P41235-1"/>
    <property type="nucleotide sequence ID" value="XM_047440135.1"/>
</dbReference>
<dbReference type="RefSeq" id="XP_047296092.1">
    <molecule id="P41235-1"/>
    <property type="nucleotide sequence ID" value="XM_047440136.1"/>
</dbReference>
<dbReference type="RefSeq" id="XP_047296093.1">
    <molecule id="P41235-1"/>
    <property type="nucleotide sequence ID" value="XM_047440137.1"/>
</dbReference>
<dbReference type="RefSeq" id="XP_047296094.1">
    <molecule id="P41235-2"/>
    <property type="nucleotide sequence ID" value="XM_047440138.1"/>
</dbReference>
<dbReference type="RefSeq" id="XP_054179377.1">
    <molecule id="P41235-1"/>
    <property type="nucleotide sequence ID" value="XM_054323402.1"/>
</dbReference>
<dbReference type="RefSeq" id="XP_054179378.1">
    <molecule id="P41235-1"/>
    <property type="nucleotide sequence ID" value="XM_054323403.1"/>
</dbReference>
<dbReference type="RefSeq" id="XP_054179379.1">
    <molecule id="P41235-1"/>
    <property type="nucleotide sequence ID" value="XM_054323404.1"/>
</dbReference>
<dbReference type="RefSeq" id="XP_054179380.1">
    <molecule id="P41235-2"/>
    <property type="nucleotide sequence ID" value="XM_054323405.1"/>
</dbReference>
<dbReference type="PDB" id="1PZL">
    <property type="method" value="X-ray"/>
    <property type="resolution" value="2.10 A"/>
    <property type="chains" value="A=142-378"/>
</dbReference>
<dbReference type="PDB" id="3CBB">
    <property type="method" value="X-ray"/>
    <property type="resolution" value="2.00 A"/>
    <property type="chains" value="A/B=58-135"/>
</dbReference>
<dbReference type="PDB" id="3FS1">
    <property type="method" value="X-ray"/>
    <property type="resolution" value="2.20 A"/>
    <property type="chains" value="A=148-377"/>
</dbReference>
<dbReference type="PDB" id="4B7W">
    <property type="method" value="X-ray"/>
    <property type="resolution" value="4.00 A"/>
    <property type="chains" value="A/B/C/D=142-377"/>
</dbReference>
<dbReference type="PDB" id="4IQR">
    <property type="method" value="X-ray"/>
    <property type="resolution" value="2.90 A"/>
    <property type="chains" value="A/B/E/F=55-377"/>
</dbReference>
<dbReference type="PDB" id="6CHT">
    <property type="method" value="X-ray"/>
    <property type="resolution" value="3.17 A"/>
    <property type="chains" value="A/B/D/E/G/H/J/K/M/N/P/Q/S/T/V/W=148-391"/>
</dbReference>
<dbReference type="PDB" id="8C1L">
    <property type="method" value="X-ray"/>
    <property type="resolution" value="2.00 A"/>
    <property type="chains" value="A/B=148-377"/>
</dbReference>
<dbReference type="PDBsum" id="1PZL"/>
<dbReference type="PDBsum" id="3CBB"/>
<dbReference type="PDBsum" id="3FS1"/>
<dbReference type="PDBsum" id="4B7W"/>
<dbReference type="PDBsum" id="4IQR"/>
<dbReference type="PDBsum" id="6CHT"/>
<dbReference type="PDBsum" id="8C1L"/>
<dbReference type="SMR" id="P41235"/>
<dbReference type="BioGRID" id="109414">
    <property type="interactions" value="271"/>
</dbReference>
<dbReference type="CORUM" id="P41235"/>
<dbReference type="DIP" id="DIP-499N"/>
<dbReference type="FunCoup" id="P41235">
    <property type="interactions" value="3908"/>
</dbReference>
<dbReference type="IntAct" id="P41235">
    <property type="interactions" value="214"/>
</dbReference>
<dbReference type="MINT" id="P41235"/>
<dbReference type="STRING" id="9606.ENSP00000312987"/>
<dbReference type="BindingDB" id="P41235"/>
<dbReference type="ChEMBL" id="CHEMBL5398"/>
<dbReference type="DrugBank" id="DB05447">
    <property type="generic name" value="AVI-4557"/>
</dbReference>
<dbReference type="DrugBank" id="DB03017">
    <property type="generic name" value="Lauric acid"/>
</dbReference>
<dbReference type="DrugBank" id="DB08231">
    <property type="generic name" value="Myristic acid"/>
</dbReference>
<dbReference type="GlyGen" id="P41235">
    <property type="glycosylation" value="1 site, 1 O-linked glycan (1 site)"/>
</dbReference>
<dbReference type="iPTMnet" id="P41235"/>
<dbReference type="PhosphoSitePlus" id="P41235"/>
<dbReference type="BioMuta" id="HNF4A"/>
<dbReference type="DMDM" id="148886624"/>
<dbReference type="jPOST" id="P41235"/>
<dbReference type="MassIVE" id="P41235"/>
<dbReference type="PaxDb" id="9606-ENSP00000312987"/>
<dbReference type="PeptideAtlas" id="P41235"/>
<dbReference type="ProteomicsDB" id="55441">
    <molecule id="P41235-1"/>
</dbReference>
<dbReference type="ProteomicsDB" id="55442">
    <molecule id="P41235-2"/>
</dbReference>
<dbReference type="ProteomicsDB" id="55443">
    <molecule id="P41235-3"/>
</dbReference>
<dbReference type="ProteomicsDB" id="55444">
    <molecule id="P41235-4"/>
</dbReference>
<dbReference type="ProteomicsDB" id="55445">
    <molecule id="P41235-5"/>
</dbReference>
<dbReference type="ProteomicsDB" id="55446">
    <molecule id="P41235-6"/>
</dbReference>
<dbReference type="ProteomicsDB" id="55447">
    <molecule id="P41235-7"/>
</dbReference>
<dbReference type="ABCD" id="P41235">
    <property type="antibodies" value="1 sequenced antibody"/>
</dbReference>
<dbReference type="Antibodypedia" id="1326">
    <property type="antibodies" value="1000 antibodies from 43 providers"/>
</dbReference>
<dbReference type="DNASU" id="3172"/>
<dbReference type="Ensembl" id="ENST00000316099.10">
    <molecule id="P41235-1"/>
    <property type="protein sequence ID" value="ENSP00000312987.3"/>
    <property type="gene ID" value="ENSG00000101076.20"/>
</dbReference>
<dbReference type="Ensembl" id="ENST00000316673.9">
    <molecule id="P41235-5"/>
    <property type="protein sequence ID" value="ENSP00000315180.4"/>
    <property type="gene ID" value="ENSG00000101076.20"/>
</dbReference>
<dbReference type="Ensembl" id="ENST00000415691.2">
    <molecule id="P41235-2"/>
    <property type="protein sequence ID" value="ENSP00000412111.1"/>
    <property type="gene ID" value="ENSG00000101076.20"/>
</dbReference>
<dbReference type="Ensembl" id="ENST00000443598.6">
    <molecule id="P41235-3"/>
    <property type="protein sequence ID" value="ENSP00000410911.2"/>
    <property type="gene ID" value="ENSG00000101076.20"/>
</dbReference>
<dbReference type="Ensembl" id="ENST00000457232.5">
    <molecule id="P41235-6"/>
    <property type="protein sequence ID" value="ENSP00000396216.1"/>
    <property type="gene ID" value="ENSG00000101076.20"/>
</dbReference>
<dbReference type="Ensembl" id="ENST00000609795.5">
    <molecule id="P41235-7"/>
    <property type="protein sequence ID" value="ENSP00000476609.1"/>
    <property type="gene ID" value="ENSG00000101076.20"/>
</dbReference>
<dbReference type="GeneID" id="3172"/>
<dbReference type="KEGG" id="hsa:3172"/>
<dbReference type="MANE-Select" id="ENST00000316673.9">
    <molecule id="P41235-5"/>
    <property type="protein sequence ID" value="ENSP00000315180.4"/>
    <property type="RefSeq nucleotide sequence ID" value="NM_175914.5"/>
    <property type="RefSeq protein sequence ID" value="NP_787110.2"/>
</dbReference>
<dbReference type="UCSC" id="uc002xlt.4">
    <molecule id="P41235-1"/>
    <property type="organism name" value="human"/>
</dbReference>
<dbReference type="AGR" id="HGNC:5024"/>
<dbReference type="CTD" id="3172"/>
<dbReference type="DisGeNET" id="3172"/>
<dbReference type="GeneCards" id="HNF4A"/>
<dbReference type="GeneReviews" id="HNF4A"/>
<dbReference type="HGNC" id="HGNC:5024">
    <property type="gene designation" value="HNF4A"/>
</dbReference>
<dbReference type="HPA" id="ENSG00000101076">
    <property type="expression patterns" value="Group enriched (intestine, kidney, liver)"/>
</dbReference>
<dbReference type="MalaCards" id="HNF4A"/>
<dbReference type="MIM" id="125850">
    <property type="type" value="phenotype"/>
</dbReference>
<dbReference type="MIM" id="125853">
    <property type="type" value="phenotype"/>
</dbReference>
<dbReference type="MIM" id="600281">
    <property type="type" value="gene"/>
</dbReference>
<dbReference type="MIM" id="606391">
    <property type="type" value="phenotype"/>
</dbReference>
<dbReference type="MIM" id="616026">
    <property type="type" value="phenotype"/>
</dbReference>
<dbReference type="neXtProt" id="NX_P41235"/>
<dbReference type="OpenTargets" id="ENSG00000101076"/>
<dbReference type="Orphanet" id="544628">
    <property type="disease" value="Atypical Fanconi syndrome-neonatal hyperinsulinism syndrome"/>
</dbReference>
<dbReference type="Orphanet" id="263455">
    <property type="disease" value="Congenital hyperinsulinism due to HNF4A deficiency"/>
</dbReference>
<dbReference type="Orphanet" id="552">
    <property type="disease" value="MODY"/>
</dbReference>
<dbReference type="PharmGKB" id="PA29349"/>
<dbReference type="VEuPathDB" id="HostDB:ENSG00000101076"/>
<dbReference type="eggNOG" id="KOG4215">
    <property type="taxonomic scope" value="Eukaryota"/>
</dbReference>
<dbReference type="GeneTree" id="ENSGT00940000157965"/>
<dbReference type="HOGENOM" id="CLU_007368_5_2_1"/>
<dbReference type="InParanoid" id="P41235"/>
<dbReference type="OMA" id="YSDICES"/>
<dbReference type="OrthoDB" id="5771769at2759"/>
<dbReference type="PAN-GO" id="P41235">
    <property type="GO annotations" value="5 GO annotations based on evolutionary models"/>
</dbReference>
<dbReference type="PhylomeDB" id="P41235"/>
<dbReference type="TreeFam" id="TF352097"/>
<dbReference type="PathwayCommons" id="P41235"/>
<dbReference type="Reactome" id="R-HSA-210745">
    <property type="pathway name" value="Regulation of gene expression in beta cells"/>
</dbReference>
<dbReference type="Reactome" id="R-HSA-383280">
    <property type="pathway name" value="Nuclear Receptor transcription pathway"/>
</dbReference>
<dbReference type="Reactome" id="R-HSA-9831926">
    <property type="pathway name" value="Nephron development"/>
</dbReference>
<dbReference type="SignaLink" id="P41235"/>
<dbReference type="SIGNOR" id="P41235"/>
<dbReference type="BioGRID-ORCS" id="3172">
    <property type="hits" value="49 hits in 1184 CRISPR screens"/>
</dbReference>
<dbReference type="ChiTaRS" id="HNF4A">
    <property type="organism name" value="human"/>
</dbReference>
<dbReference type="EvolutionaryTrace" id="P41235"/>
<dbReference type="GeneWiki" id="Hepatocyte_nuclear_factor_4_alpha"/>
<dbReference type="GenomeRNAi" id="3172"/>
<dbReference type="Pharos" id="P41235">
    <property type="development level" value="Tchem"/>
</dbReference>
<dbReference type="PRO" id="PR:P41235"/>
<dbReference type="Proteomes" id="UP000005640">
    <property type="component" value="Chromosome 20"/>
</dbReference>
<dbReference type="RNAct" id="P41235">
    <property type="molecule type" value="protein"/>
</dbReference>
<dbReference type="Bgee" id="ENSG00000101076">
    <property type="expression patterns" value="Expressed in right lobe of liver and 93 other cell types or tissues"/>
</dbReference>
<dbReference type="ExpressionAtlas" id="P41235">
    <property type="expression patterns" value="baseline and differential"/>
</dbReference>
<dbReference type="GO" id="GO:0000785">
    <property type="term" value="C:chromatin"/>
    <property type="evidence" value="ECO:0000247"/>
    <property type="project" value="NTNU_SB"/>
</dbReference>
<dbReference type="GO" id="GO:0005737">
    <property type="term" value="C:cytoplasm"/>
    <property type="evidence" value="ECO:0000314"/>
    <property type="project" value="BHF-UCL"/>
</dbReference>
<dbReference type="GO" id="GO:0005654">
    <property type="term" value="C:nucleoplasm"/>
    <property type="evidence" value="ECO:0000314"/>
    <property type="project" value="HPA"/>
</dbReference>
<dbReference type="GO" id="GO:0005634">
    <property type="term" value="C:nucleus"/>
    <property type="evidence" value="ECO:0000314"/>
    <property type="project" value="BHF-UCL"/>
</dbReference>
<dbReference type="GO" id="GO:0003682">
    <property type="term" value="F:chromatin binding"/>
    <property type="evidence" value="ECO:0007669"/>
    <property type="project" value="Ensembl"/>
</dbReference>
<dbReference type="GO" id="GO:0003677">
    <property type="term" value="F:DNA binding"/>
    <property type="evidence" value="ECO:0000314"/>
    <property type="project" value="BHF-UCL"/>
</dbReference>
<dbReference type="GO" id="GO:0001228">
    <property type="term" value="F:DNA-binding transcription activator activity, RNA polymerase II-specific"/>
    <property type="evidence" value="ECO:0000250"/>
    <property type="project" value="BHF-UCL"/>
</dbReference>
<dbReference type="GO" id="GO:0003700">
    <property type="term" value="F:DNA-binding transcription factor activity"/>
    <property type="evidence" value="ECO:0000314"/>
    <property type="project" value="BHF-UCL"/>
</dbReference>
<dbReference type="GO" id="GO:0000981">
    <property type="term" value="F:DNA-binding transcription factor activity, RNA polymerase II-specific"/>
    <property type="evidence" value="ECO:0000247"/>
    <property type="project" value="NTNU_SB"/>
</dbReference>
<dbReference type="GO" id="GO:0005504">
    <property type="term" value="F:fatty acid binding"/>
    <property type="evidence" value="ECO:0000314"/>
    <property type="project" value="BHF-UCL"/>
</dbReference>
<dbReference type="GO" id="GO:0004879">
    <property type="term" value="F:nuclear receptor activity"/>
    <property type="evidence" value="ECO:0000314"/>
    <property type="project" value="GO_Central"/>
</dbReference>
<dbReference type="GO" id="GO:0042803">
    <property type="term" value="F:protein homodimerization activity"/>
    <property type="evidence" value="ECO:0000314"/>
    <property type="project" value="BHF-UCL"/>
</dbReference>
<dbReference type="GO" id="GO:0000978">
    <property type="term" value="F:RNA polymerase II cis-regulatory region sequence-specific DNA binding"/>
    <property type="evidence" value="ECO:0000318"/>
    <property type="project" value="GO_Central"/>
</dbReference>
<dbReference type="GO" id="GO:0061629">
    <property type="term" value="F:RNA polymerase II-specific DNA-binding transcription factor binding"/>
    <property type="evidence" value="ECO:0000250"/>
    <property type="project" value="BHF-UCL"/>
</dbReference>
<dbReference type="GO" id="GO:1990837">
    <property type="term" value="F:sequence-specific double-stranded DNA binding"/>
    <property type="evidence" value="ECO:0000314"/>
    <property type="project" value="ARUK-UCL"/>
</dbReference>
<dbReference type="GO" id="GO:0005102">
    <property type="term" value="F:signaling receptor binding"/>
    <property type="evidence" value="ECO:0000314"/>
    <property type="project" value="BHF-UCL"/>
</dbReference>
<dbReference type="GO" id="GO:0000976">
    <property type="term" value="F:transcription cis-regulatory region binding"/>
    <property type="evidence" value="ECO:0000314"/>
    <property type="project" value="BHF-UCL"/>
</dbReference>
<dbReference type="GO" id="GO:0008270">
    <property type="term" value="F:zinc ion binding"/>
    <property type="evidence" value="ECO:0007669"/>
    <property type="project" value="UniProtKB-KW"/>
</dbReference>
<dbReference type="GO" id="GO:0007596">
    <property type="term" value="P:blood coagulation"/>
    <property type="evidence" value="ECO:0000314"/>
    <property type="project" value="BHF-UCL"/>
</dbReference>
<dbReference type="GO" id="GO:0030154">
    <property type="term" value="P:cell differentiation"/>
    <property type="evidence" value="ECO:0000318"/>
    <property type="project" value="GO_Central"/>
</dbReference>
<dbReference type="GO" id="GO:0042632">
    <property type="term" value="P:cholesterol homeostasis"/>
    <property type="evidence" value="ECO:0000250"/>
    <property type="project" value="BHF-UCL"/>
</dbReference>
<dbReference type="GO" id="GO:0042593">
    <property type="term" value="P:glucose homeostasis"/>
    <property type="evidence" value="ECO:0000250"/>
    <property type="project" value="BHF-UCL"/>
</dbReference>
<dbReference type="GO" id="GO:0055088">
    <property type="term" value="P:lipid homeostasis"/>
    <property type="evidence" value="ECO:0000315"/>
    <property type="project" value="BHF-UCL"/>
</dbReference>
<dbReference type="GO" id="GO:0006629">
    <property type="term" value="P:lipid metabolic process"/>
    <property type="evidence" value="ECO:0007669"/>
    <property type="project" value="Ensembl"/>
</dbReference>
<dbReference type="GO" id="GO:0030308">
    <property type="term" value="P:negative regulation of cell growth"/>
    <property type="evidence" value="ECO:0000315"/>
    <property type="project" value="BHF-UCL"/>
</dbReference>
<dbReference type="GO" id="GO:0008285">
    <property type="term" value="P:negative regulation of cell population proliferation"/>
    <property type="evidence" value="ECO:0000315"/>
    <property type="project" value="BHF-UCL"/>
</dbReference>
<dbReference type="GO" id="GO:0045892">
    <property type="term" value="P:negative regulation of DNA-templated transcription"/>
    <property type="evidence" value="ECO:0000314"/>
    <property type="project" value="UniProtKB"/>
</dbReference>
<dbReference type="GO" id="GO:0055091">
    <property type="term" value="P:phospholipid homeostasis"/>
    <property type="evidence" value="ECO:0000250"/>
    <property type="project" value="BHF-UCL"/>
</dbReference>
<dbReference type="GO" id="GO:0045893">
    <property type="term" value="P:positive regulation of DNA-templated transcription"/>
    <property type="evidence" value="ECO:0000314"/>
    <property type="project" value="BHF-UCL"/>
</dbReference>
<dbReference type="GO" id="GO:0045944">
    <property type="term" value="P:positive regulation of transcription by RNA polymerase II"/>
    <property type="evidence" value="ECO:0000314"/>
    <property type="project" value="MGI"/>
</dbReference>
<dbReference type="GO" id="GO:0042752">
    <property type="term" value="P:regulation of circadian rhythm"/>
    <property type="evidence" value="ECO:0000315"/>
    <property type="project" value="UniProtKB"/>
</dbReference>
<dbReference type="GO" id="GO:0010470">
    <property type="term" value="P:regulation of gastrulation"/>
    <property type="evidence" value="ECO:0007669"/>
    <property type="project" value="Ensembl"/>
</dbReference>
<dbReference type="GO" id="GO:0060398">
    <property type="term" value="P:regulation of growth hormone receptor signaling pathway"/>
    <property type="evidence" value="ECO:0000303"/>
    <property type="project" value="BHF-UCL"/>
</dbReference>
<dbReference type="GO" id="GO:0050796">
    <property type="term" value="P:regulation of insulin secretion"/>
    <property type="evidence" value="ECO:0000250"/>
    <property type="project" value="BHF-UCL"/>
</dbReference>
<dbReference type="GO" id="GO:0019216">
    <property type="term" value="P:regulation of lipid metabolic process"/>
    <property type="evidence" value="ECO:0000314"/>
    <property type="project" value="BHF-UCL"/>
</dbReference>
<dbReference type="GO" id="GO:0090368">
    <property type="term" value="P:regulation of ornithine metabolic process"/>
    <property type="evidence" value="ECO:0000315"/>
    <property type="project" value="BHF-UCL"/>
</dbReference>
<dbReference type="GO" id="GO:0006357">
    <property type="term" value="P:regulation of transcription by RNA polymerase II"/>
    <property type="evidence" value="ECO:0000314"/>
    <property type="project" value="BHF-UCL"/>
</dbReference>
<dbReference type="GO" id="GO:0009749">
    <property type="term" value="P:response to glucose"/>
    <property type="evidence" value="ECO:0000250"/>
    <property type="project" value="BHF-UCL"/>
</dbReference>
<dbReference type="GO" id="GO:0048511">
    <property type="term" value="P:rhythmic process"/>
    <property type="evidence" value="ECO:0007669"/>
    <property type="project" value="UniProtKB-KW"/>
</dbReference>
<dbReference type="GO" id="GO:0007548">
    <property type="term" value="P:sex differentiation"/>
    <property type="evidence" value="ECO:0007669"/>
    <property type="project" value="Ensembl"/>
</dbReference>
<dbReference type="GO" id="GO:0023019">
    <property type="term" value="P:signal transduction involved in regulation of gene expression"/>
    <property type="evidence" value="ECO:0007669"/>
    <property type="project" value="Ensembl"/>
</dbReference>
<dbReference type="GO" id="GO:0006366">
    <property type="term" value="P:transcription by RNA polymerase II"/>
    <property type="evidence" value="ECO:0007669"/>
    <property type="project" value="Ensembl"/>
</dbReference>
<dbReference type="GO" id="GO:0070328">
    <property type="term" value="P:triglyceride homeostasis"/>
    <property type="evidence" value="ECO:0000250"/>
    <property type="project" value="BHF-UCL"/>
</dbReference>
<dbReference type="GO" id="GO:0006805">
    <property type="term" value="P:xenobiotic metabolic process"/>
    <property type="evidence" value="ECO:0000315"/>
    <property type="project" value="BHF-UCL"/>
</dbReference>
<dbReference type="CDD" id="cd06960">
    <property type="entry name" value="NR_DBD_HNF4A"/>
    <property type="match status" value="1"/>
</dbReference>
<dbReference type="CDD" id="cd06931">
    <property type="entry name" value="NR_LBD_HNF4_like"/>
    <property type="match status" value="1"/>
</dbReference>
<dbReference type="FunFam" id="1.10.565.10:FF:000007">
    <property type="entry name" value="Hepatocyte nuclear factor 4 alpha"/>
    <property type="match status" value="1"/>
</dbReference>
<dbReference type="FunFam" id="3.30.50.10:FF:000012">
    <property type="entry name" value="Hepatocyte nuclear factor 4, alpha"/>
    <property type="match status" value="1"/>
</dbReference>
<dbReference type="Gene3D" id="3.30.50.10">
    <property type="entry name" value="Erythroid Transcription Factor GATA-1, subunit A"/>
    <property type="match status" value="1"/>
</dbReference>
<dbReference type="Gene3D" id="1.10.565.10">
    <property type="entry name" value="Retinoid X Receptor"/>
    <property type="match status" value="1"/>
</dbReference>
<dbReference type="IDEAL" id="IID00045"/>
<dbReference type="InterPro" id="IPR049636">
    <property type="entry name" value="HNF4-like_DBD"/>
</dbReference>
<dbReference type="InterPro" id="IPR049635">
    <property type="entry name" value="HNF4_LBD"/>
</dbReference>
<dbReference type="InterPro" id="IPR035500">
    <property type="entry name" value="NHR-like_dom_sf"/>
</dbReference>
<dbReference type="InterPro" id="IPR000536">
    <property type="entry name" value="Nucl_hrmn_rcpt_lig-bd"/>
</dbReference>
<dbReference type="InterPro" id="IPR050274">
    <property type="entry name" value="Nuclear_hormone_rcpt_NR2"/>
</dbReference>
<dbReference type="InterPro" id="IPR001723">
    <property type="entry name" value="Nuclear_hrmn_rcpt"/>
</dbReference>
<dbReference type="InterPro" id="IPR001628">
    <property type="entry name" value="Znf_hrmn_rcpt"/>
</dbReference>
<dbReference type="InterPro" id="IPR013088">
    <property type="entry name" value="Znf_NHR/GATA"/>
</dbReference>
<dbReference type="PANTHER" id="PTHR24083">
    <property type="entry name" value="NUCLEAR HORMONE RECEPTOR"/>
    <property type="match status" value="1"/>
</dbReference>
<dbReference type="Pfam" id="PF00104">
    <property type="entry name" value="Hormone_recep"/>
    <property type="match status" value="1"/>
</dbReference>
<dbReference type="Pfam" id="PF00105">
    <property type="entry name" value="zf-C4"/>
    <property type="match status" value="1"/>
</dbReference>
<dbReference type="PRINTS" id="PR01282">
    <property type="entry name" value="COUPTNFACTOR"/>
</dbReference>
<dbReference type="PRINTS" id="PR00398">
    <property type="entry name" value="STRDHORMONER"/>
</dbReference>
<dbReference type="PRINTS" id="PR00047">
    <property type="entry name" value="STROIDFINGER"/>
</dbReference>
<dbReference type="SMART" id="SM00430">
    <property type="entry name" value="HOLI"/>
    <property type="match status" value="1"/>
</dbReference>
<dbReference type="SMART" id="SM00399">
    <property type="entry name" value="ZnF_C4"/>
    <property type="match status" value="1"/>
</dbReference>
<dbReference type="SUPFAM" id="SSF57716">
    <property type="entry name" value="Glucocorticoid receptor-like (DNA-binding domain)"/>
    <property type="match status" value="1"/>
</dbReference>
<dbReference type="SUPFAM" id="SSF48508">
    <property type="entry name" value="Nuclear receptor ligand-binding domain"/>
    <property type="match status" value="1"/>
</dbReference>
<dbReference type="PROSITE" id="PS51843">
    <property type="entry name" value="NR_LBD"/>
    <property type="match status" value="1"/>
</dbReference>
<dbReference type="PROSITE" id="PS00031">
    <property type="entry name" value="NUCLEAR_REC_DBD_1"/>
    <property type="match status" value="1"/>
</dbReference>
<dbReference type="PROSITE" id="PS51030">
    <property type="entry name" value="NUCLEAR_REC_DBD_2"/>
    <property type="match status" value="1"/>
</dbReference>
<comment type="function">
    <text evidence="2 15 16">Transcriptional regulator which controls the expression of hepatic genes during the transition of endodermal cells to hepatic progenitor cells, facilitating the recruitment of RNA pol II to the promoters of target genes (PubMed:30597922). Activates the transcription of CYP2C38 (By similarity). Represses the CLOCK-BMAL1 transcriptional activity and is essential for circadian rhythm maintenance and period regulation in the liver and colon cells (PubMed:30530698).</text>
</comment>
<comment type="subunit">
    <text evidence="8 13 15">Homodimerization is required for HNF4-alpha to bind to its recognition site (PubMed:14982928). Interacts with CLOCK, BMAL1, CRY1, CRY2, PER1 and PER2 (PubMed:30530698). Interacts with NR0B2/SHP; the resulting heterodimer is transcriptionally inactive (PubMed:28128295). Interacts with DDX3X; this interaction disrupts the interaction between HNF4 and NR0B2 that forms inactive heterodimers and enhances the formation of active HNF4 homodimers (PubMed:28128295).</text>
</comment>
<comment type="interaction">
    <interactant intactId="EBI-1049011">
        <id>P41235</id>
    </interactant>
    <interactant intactId="EBI-937732">
        <id>Q99967</id>
        <label>CITED2</label>
    </interactant>
    <organismsDiffer>false</organismsDiffer>
    <experiments>3</experiments>
</comment>
<comment type="interaction">
    <interactant intactId="EBI-1049011">
        <id>P41235</id>
    </interactant>
    <interactant intactId="EBI-8531039">
        <id>A8MYZ6</id>
        <label>FOXO6</label>
    </interactant>
    <organismsDiffer>false</organismsDiffer>
    <experiments>2</experiments>
</comment>
<comment type="interaction">
    <interactant intactId="EBI-1049011">
        <id>P41235</id>
    </interactant>
    <interactant intactId="EBI-493507">
        <id>P04150</id>
        <label>NR3C1</label>
    </interactant>
    <organismsDiffer>false</organismsDiffer>
    <experiments>2</experiments>
</comment>
<comment type="interaction">
    <interactant intactId="EBI-1049011">
        <id>P41235</id>
    </interactant>
    <interactant intactId="EBI-765486">
        <id>Q9UBK2</id>
        <label>PPARGC1A</label>
    </interactant>
    <organismsDiffer>false</organismsDiffer>
    <experiments>4</experiments>
</comment>
<comment type="interaction">
    <interactant intactId="EBI-1049011">
        <id>P41235</id>
    </interactant>
    <interactant intactId="EBI-3912635">
        <id>Q92786</id>
        <label>PROX1</label>
    </interactant>
    <organismsDiffer>false</organismsDiffer>
    <experiments>3</experiments>
</comment>
<comment type="interaction">
    <interactant intactId="EBI-1049011">
        <id>P41235</id>
    </interactant>
    <interactant intactId="EBI-355453">
        <id>P23246</id>
        <label>SFPQ</label>
    </interactant>
    <organismsDiffer>false</organismsDiffer>
    <experiments>2</experiments>
</comment>
<comment type="interaction">
    <interactant intactId="EBI-1049011">
        <id>P41235</id>
    </interactant>
    <interactant intactId="EBI-465059">
        <id>Q12772</id>
        <label>SREBF2</label>
    </interactant>
    <organismsDiffer>false</organismsDiffer>
    <experiments>2</experiments>
</comment>
<comment type="interaction">
    <interactant intactId="EBI-1049011">
        <id>P41235</id>
    </interactant>
    <interactant intactId="EBI-366083">
        <id>P04637</id>
        <label>TP53</label>
    </interactant>
    <organismsDiffer>false</organismsDiffer>
    <experiments>3</experiments>
</comment>
<comment type="interaction">
    <interactant intactId="EBI-12690684">
        <id>P41235-3</id>
    </interactant>
    <interactant intactId="EBI-295827">
        <id>P11532</id>
        <label>DMD</label>
    </interactant>
    <organismsDiffer>false</organismsDiffer>
    <experiments>3</experiments>
</comment>
<comment type="interaction">
    <interactant intactId="EBI-12690684">
        <id>P41235-3</id>
    </interactant>
    <interactant intactId="EBI-286439">
        <id>O14602</id>
        <label>EIF1AY</label>
    </interactant>
    <organismsDiffer>false</organismsDiffer>
    <experiments>3</experiments>
</comment>
<comment type="interaction">
    <interactant intactId="EBI-12690684">
        <id>P41235-3</id>
    </interactant>
    <interactant intactId="EBI-722017">
        <id>O43688</id>
        <label>PLPP2</label>
    </interactant>
    <organismsDiffer>false</organismsDiffer>
    <experiments>3</experiments>
</comment>
<comment type="subcellular location">
    <subcellularLocation>
        <location>Nucleus</location>
    </subcellularLocation>
</comment>
<comment type="alternative products">
    <event type="alternative promoter"/>
    <event type="alternative splicing"/>
    <isoform>
        <id>P41235-1</id>
        <name>HNF4-Alpha-1</name>
        <name>HNF-4B</name>
        <sequence type="displayed"/>
    </isoform>
    <isoform>
        <id>P41235-2</id>
        <name>HNF4-Alpha-2</name>
        <name>HNF4-A</name>
        <sequence type="described" ref="VSP_003674"/>
    </isoform>
    <isoform>
        <id>P41235-3</id>
        <name>HNF4-Alpha-3</name>
        <name>HNF4-C</name>
        <sequence type="described" ref="VSP_003675"/>
    </isoform>
    <isoform>
        <id>P41235-4</id>
        <name>HNF4-Alpha-4</name>
        <sequence type="described" ref="VSP_003673"/>
    </isoform>
    <isoform>
        <id>P41235-5</id>
        <name>HNF4-Alpha-7</name>
        <sequence type="described" ref="VSP_026030"/>
    </isoform>
    <isoform>
        <id>P41235-6</id>
        <name>HNF4-Alpha-8</name>
        <sequence type="described" ref="VSP_026030 VSP_003674"/>
    </isoform>
    <isoform>
        <id>P41235-7</id>
        <name>HNF4-Alpha-9</name>
        <sequence type="described" ref="VSP_026030 VSP_003675"/>
    </isoform>
    <text>Additional isoforms seem to exist.</text>
</comment>
<comment type="domain">
    <text evidence="27">The 9aaTAD motif is a transactivation domain present in a large number of yeast and animal transcription factors.</text>
</comment>
<comment type="PTM">
    <text evidence="7 10 17">Phosphorylated on tyrosine residue(s); phosphorylation is important for its DNA-binding activity. Phosphorylation may directly or indirectly play a regulatory role in the subnuclear distribution. Phosphorylation at Ser-313 by AMPK reduces the ability to form homodimers and bind DNA.</text>
</comment>
<comment type="PTM">
    <text evidence="10">Acetylation at Lys-458 lowers transcriptional activation by about two-fold.</text>
</comment>
<comment type="disease" evidence="6 9 19 21">
    <disease id="DI-01943">
        <name>Maturity-onset diabetes of the young 1</name>
        <acronym>MODY1</acronym>
        <description>A form of diabetes that is characterized by an autosomal dominant mode of inheritance, onset in childhood or early adulthood (usually before 25 years of age), a primary defect in insulin secretion and frequent insulin-independence at the beginning of the disease.</description>
        <dbReference type="MIM" id="125850"/>
    </disease>
    <text>The disease is caused by variants affecting the gene represented in this entry.</text>
</comment>
<comment type="disease" evidence="22">
    <disease id="DI-02060">
        <name>Type 2 diabetes mellitus</name>
        <acronym>T2D</acronym>
        <description>A multifactorial disorder of glucose homeostasis caused by a lack of sensitivity to insulin. Affected individuals usually have an obese body habitus and manifestations of a metabolic syndrome characterized by diabetes, insulin resistance, hypertension and hypertriglyceridemia. The disease results in long-term complications that affect the eyes, kidneys, nerves, and blood vessels.</description>
        <dbReference type="MIM" id="125853"/>
    </disease>
    <text>Disease susceptibility may be associated with variants affecting the gene represented in this entry.</text>
</comment>
<comment type="disease" evidence="11 12">
    <disease id="DI-04230">
        <name>Fanconi renotubular syndrome 4 with maturity-onset diabetes of the young</name>
        <acronym>FRTS4</acronym>
        <description>An autosomal dominant disease characterized by Fanconi syndrome associated with a beta cell phenotype of neonatal hyperinsulinism with macrosomia and young onset diabetes. Fanconi syndrome is a proximal tubulopathy resulting in generalized aminoaciduria, low molecular weight proteinuria, glycosuria, hyperphosphaturia and hypouricemia. Some FRTS4 patients have nephrocalcinosis, renal impairment, hypercalciuria with relative hypocalcemia, and hypermagnesemia.</description>
        <dbReference type="MIM" id="616026"/>
    </disease>
    <text>The disease is caused by variants affecting the gene represented in this entry.</text>
</comment>
<comment type="miscellaneous">
    <text>Binds fatty acids.</text>
</comment>
<comment type="miscellaneous">
    <molecule>Isoform HNF4-Alpha-1</molecule>
    <text>Produced by alternative promoter usage.</text>
</comment>
<comment type="miscellaneous">
    <molecule>Isoform HNF4-Alpha-2</molecule>
    <text evidence="26">Produced by alternative splicing of isoform HNF4-Alpha-1.</text>
</comment>
<comment type="miscellaneous">
    <molecule>Isoform HNF4-Alpha-3</molecule>
    <text evidence="26">Produced by alternative splicing of isoform HNF4-Alpha-1.</text>
</comment>
<comment type="miscellaneous">
    <molecule>Isoform HNF4-Alpha-4</molecule>
    <text evidence="26">Produced by alternative splicing of isoform HNF4-Alpha-1.</text>
</comment>
<comment type="miscellaneous">
    <molecule>Isoform HNF4-Alpha-7</molecule>
    <text evidence="26">Produced by alternative promoter usage.</text>
</comment>
<comment type="miscellaneous">
    <molecule>Isoform HNF4-Alpha-8</molecule>
    <text evidence="26">Produced by alternative splicing of isoform HNF4-Alpha-7.</text>
</comment>
<comment type="miscellaneous">
    <molecule>Isoform HNF4-Alpha-9</molecule>
    <text evidence="26">Produced by alternative splicing of isoform HNF4-Alpha-7.</text>
</comment>
<comment type="similarity">
    <text evidence="26">Belongs to the nuclear hormone receptor family. NR2 subfamily.</text>
</comment>
<comment type="sequence caution" evidence="26">
    <conflict type="erroneous gene model prediction">
        <sequence resource="EMBL-CDS" id="AAB48082"/>
    </conflict>
</comment>
<comment type="sequence caution" evidence="26">
    <conflict type="erroneous initiation">
        <sequence resource="EMBL-CDS" id="CAA54248"/>
    </conflict>
    <text>Truncated N-terminus.</text>
</comment>
<comment type="sequence caution" evidence="26">
    <conflict type="frameshift">
        <sequence resource="EMBL-CDS" id="CAA61133"/>
    </conflict>
</comment>
<comment type="sequence caution" evidence="26">
    <conflict type="frameshift">
        <sequence resource="EMBL-CDS" id="CAA61134"/>
    </conflict>
</comment>
<comment type="sequence caution" evidence="26">
    <conflict type="frameshift">
        <sequence resource="EMBL-CDS" id="CAA61135"/>
    </conflict>
</comment>
<comment type="online information" name="Wikipedia">
    <link uri="https://en.wikipedia.org/wiki/Hepatocyte_nuclear_factors"/>
    <text>Hepatocyte nuclear factors entry</text>
</comment>
<feature type="chain" id="PRO_0000053558" description="Hepatocyte nuclear factor 4-alpha">
    <location>
        <begin position="1"/>
        <end position="474"/>
    </location>
</feature>
<feature type="domain" description="NR LBD" evidence="4">
    <location>
        <begin position="147"/>
        <end position="377"/>
    </location>
</feature>
<feature type="DNA-binding region" description="Nuclear receptor" evidence="3">
    <location>
        <begin position="57"/>
        <end position="132"/>
    </location>
</feature>
<feature type="zinc finger region" description="NR C4-type" evidence="3">
    <location>
        <begin position="60"/>
        <end position="80"/>
    </location>
</feature>
<feature type="zinc finger region" description="NR C4-type" evidence="3">
    <location>
        <begin position="96"/>
        <end position="120"/>
    </location>
</feature>
<feature type="region of interest" description="Disordered" evidence="5">
    <location>
        <begin position="419"/>
        <end position="447"/>
    </location>
</feature>
<feature type="short sequence motif" description="9aaTAD" evidence="14">
    <location>
        <begin position="368"/>
        <end position="376"/>
    </location>
</feature>
<feature type="modified residue" description="Phosphoserine" evidence="10">
    <location>
        <position position="142"/>
    </location>
</feature>
<feature type="modified residue" description="Phosphoserine" evidence="1">
    <location>
        <position position="143"/>
    </location>
</feature>
<feature type="modified residue" description="Phosphotyrosine" evidence="28">
    <location>
        <position position="144"/>
    </location>
</feature>
<feature type="modified residue" description="Phosphothreonine" evidence="10">
    <location>
        <position position="166"/>
    </location>
</feature>
<feature type="modified residue" description="Phosphoserine" evidence="10">
    <location>
        <position position="167"/>
    </location>
</feature>
<feature type="modified residue" description="Phosphoserine; by AMPK" evidence="7">
    <location>
        <position position="313"/>
    </location>
</feature>
<feature type="modified residue" description="Phosphothreonine" evidence="28">
    <location>
        <position position="429"/>
    </location>
</feature>
<feature type="modified residue" description="Phosphothreonine" evidence="10 28">
    <location>
        <position position="432"/>
    </location>
</feature>
<feature type="modified residue" description="Phosphoserine" evidence="10 28">
    <location>
        <position position="436"/>
    </location>
</feature>
<feature type="modified residue" description="N6-acetyllysine" evidence="10">
    <location>
        <position position="458"/>
    </location>
</feature>
<feature type="cross-link" description="Glycyl lysine isopeptide (Lys-Gly) (interchain with G-Cter in ubiquitin)" evidence="10">
    <location>
        <position position="234"/>
    </location>
</feature>
<feature type="cross-link" description="Glycyl lysine isopeptide (Lys-Gly) (interchain with G-Cter in ubiquitin)" evidence="10">
    <location>
        <position position="307"/>
    </location>
</feature>
<feature type="splice variant" id="VSP_026030" description="In isoform HNF4-Alpha-7, isoform HNF4-Alpha-8 and isoform HNF4-Alpha-9." evidence="26">
    <original>MRLSKTLVDMDMADYSAALDPAYTTLEFENVQVLTMGN</original>
    <variation>MVSVNAPLGAPVESSY</variation>
    <location>
        <begin position="1"/>
        <end position="38"/>
    </location>
</feature>
<feature type="splice variant" id="VSP_003673" description="In isoform HNF4-Alpha-4." evidence="26">
    <original>N</original>
    <variation>NDLLPLRLARLRHPLRHHWSISGGVDSSPQG</variation>
    <location>
        <position position="38"/>
    </location>
</feature>
<feature type="splice variant" id="VSP_003675" description="In isoform HNF4-Alpha-3 and isoform HNF4-Alpha-9." evidence="24 25">
    <original>SPSDAPHAHHPLHPHLMQEHMGTNVIVANTMPTHLSNGQMCEWPRPRGQAATPETPQPSPPGGSGSEPYKLLPGAVATIVKPLSAIPQPTITKQEVI</original>
    <variation>PCQAQEGRGWSGDSPGDRPHTVSSPLSSLASPLCRFGQVA</variation>
    <location>
        <begin position="378"/>
        <end position="474"/>
    </location>
</feature>
<feature type="splice variant" id="VSP_003674" description="In isoform HNF4-Alpha-2 and isoform HNF4-Alpha-8." evidence="25">
    <original>CEWPRPRGQAA</original>
    <variation>S</variation>
    <location>
        <begin position="418"/>
        <end position="428"/>
    </location>
</feature>
<feature type="sequence variant" id="VAR_071951" description="In FRTS4; dbSNP:rs587777732." evidence="11 12">
    <original>R</original>
    <variation>W</variation>
    <location>
        <position position="85"/>
    </location>
</feature>
<feature type="sequence variant" id="VAR_004668" description="In MODY1; dbSNP:rs137853336." evidence="21">
    <original>R</original>
    <variation>W</variation>
    <location>
        <position position="136"/>
    </location>
</feature>
<feature type="sequence variant" id="VAR_004669" description="In dbSNP:rs1800961." evidence="20 23">
    <original>T</original>
    <variation>I</variation>
    <location>
        <position position="139"/>
    </location>
</feature>
<feature type="sequence variant" id="VAR_010600" description="Found in a patient with non-insulin-dependent diabetes mellitus; does not affect activity; dbSNP:rs139779712." evidence="6 20">
    <original>V</original>
    <variation>M</variation>
    <location>
        <position position="264"/>
    </location>
</feature>
<feature type="sequence variant" id="VAR_010601" description="In MODY1; results in loss of function." evidence="6 19">
    <original>E</original>
    <variation>Q</variation>
    <location>
        <position position="285"/>
    </location>
</feature>
<feature type="sequence variant" id="VAR_071952" description="In MODY1; dbSNP:rs137853338." evidence="9">
    <original>M</original>
    <variation>R</variation>
    <location>
        <position position="373"/>
    </location>
</feature>
<feature type="sequence variant" id="VAR_004670" description="In T2D; reduced transactivation activity; dbSNP:rs137853337." evidence="22">
    <original>V</original>
    <variation>I</variation>
    <location>
        <position position="402"/>
    </location>
</feature>
<feature type="sequence variant" id="VAR_011785" description="In dbSNP:rs1063239." evidence="18">
    <original>P</original>
    <variation>S</variation>
    <location>
        <position position="445"/>
    </location>
</feature>
<feature type="sequence variant" id="VAR_062267" description="In dbSNP:rs776824742." evidence="23">
    <original>V</original>
    <variation>I</variation>
    <location>
        <position position="453"/>
    </location>
</feature>
<feature type="mutagenesis site" description="Abolishes AMPK-mediated phosphorylation." evidence="7">
    <original>S</original>
    <variation>A</variation>
    <location>
        <position position="313"/>
    </location>
</feature>
<feature type="mutagenesis site" description="Phosphomimetic mutant that leads to reduced ability to bind DNA." evidence="7">
    <original>S</original>
    <variation>D</variation>
    <location>
        <position position="313"/>
    </location>
</feature>
<feature type="sequence conflict" description="In Ref. 9; CAA54248." evidence="26" ref="9">
    <original>G</original>
    <variation>A</variation>
    <location>
        <position position="440"/>
    </location>
</feature>
<feature type="turn" evidence="30">
    <location>
        <begin position="61"/>
        <end position="63"/>
    </location>
</feature>
<feature type="strand" evidence="30">
    <location>
        <begin position="64"/>
        <end position="66"/>
    </location>
</feature>
<feature type="strand" evidence="30">
    <location>
        <begin position="69"/>
        <end position="71"/>
    </location>
</feature>
<feature type="helix" evidence="30">
    <location>
        <begin position="78"/>
        <end position="89"/>
    </location>
</feature>
<feature type="strand" evidence="31">
    <location>
        <begin position="97"/>
        <end position="100"/>
    </location>
</feature>
<feature type="turn" evidence="30">
    <location>
        <begin position="106"/>
        <end position="111"/>
    </location>
</feature>
<feature type="helix" evidence="30">
    <location>
        <begin position="113"/>
        <end position="123"/>
    </location>
</feature>
<feature type="helix" evidence="30">
    <location>
        <begin position="127"/>
        <end position="129"/>
    </location>
</feature>
<feature type="helix" evidence="29">
    <location>
        <begin position="149"/>
        <end position="153"/>
    </location>
</feature>
<feature type="helix" evidence="29">
    <location>
        <begin position="155"/>
        <end position="163"/>
    </location>
</feature>
<feature type="turn" evidence="29">
    <location>
        <begin position="176"/>
        <end position="178"/>
    </location>
</feature>
<feature type="helix" evidence="29">
    <location>
        <begin position="184"/>
        <end position="202"/>
    </location>
</feature>
<feature type="helix" evidence="29">
    <location>
        <begin position="206"/>
        <end position="209"/>
    </location>
</feature>
<feature type="helix" evidence="29">
    <location>
        <begin position="213"/>
        <end position="222"/>
    </location>
</feature>
<feature type="helix" evidence="29">
    <location>
        <begin position="224"/>
        <end position="236"/>
    </location>
</feature>
<feature type="strand" evidence="29">
    <location>
        <begin position="239"/>
        <end position="244"/>
    </location>
</feature>
<feature type="strand" evidence="29">
    <location>
        <begin position="250"/>
        <end position="254"/>
    </location>
</feature>
<feature type="helix" evidence="29">
    <location>
        <begin position="256"/>
        <end position="261"/>
    </location>
</feature>
<feature type="helix" evidence="29">
    <location>
        <begin position="262"/>
        <end position="271"/>
    </location>
</feature>
<feature type="helix" evidence="29">
    <location>
        <begin position="273"/>
        <end position="279"/>
    </location>
</feature>
<feature type="helix" evidence="29">
    <location>
        <begin position="283"/>
        <end position="294"/>
    </location>
</feature>
<feature type="helix" evidence="29">
    <location>
        <begin position="305"/>
        <end position="324"/>
    </location>
</feature>
<feature type="strand" evidence="29">
    <location>
        <begin position="325"/>
        <end position="328"/>
    </location>
</feature>
<feature type="helix" evidence="29">
    <location>
        <begin position="333"/>
        <end position="338"/>
    </location>
</feature>
<feature type="helix" evidence="29">
    <location>
        <begin position="340"/>
        <end position="360"/>
    </location>
</feature>
<feature type="helix" evidence="29">
    <location>
        <begin position="368"/>
        <end position="374"/>
    </location>
</feature>